<keyword id="KW-0067">ATP-binding</keyword>
<keyword id="KW-0227">DNA damage</keyword>
<keyword id="KW-0234">DNA repair</keyword>
<keyword id="KW-0238">DNA-binding</keyword>
<keyword id="KW-0547">Nucleotide-binding</keyword>
<keyword id="KW-1185">Reference proteome</keyword>
<sequence>MKAIDSQDLEKHTPMMRQYLTLKAENPDVLLFYRMGDFYELFYDDAKKASELLGISLTARGKSGGDPIPMAGLPYHAVEGYLAKLVQLRVSVAICEQVGDPATSKGPVERKVVRLVTPGTLTDEALLQERQDNLLAAVYHGKKGFGYATLDISSGRFVIAELESCEALEAELQRTSPAELLYSEDFSEMSLISAFEGTRRRPEWEFDFDTSQKLLLDQFGTKDLQGFGLDGARLSLQAAGCLMQYVKDTQRTALPHINSIVRFNQGDSIILDAATRRNLELTMNLQGGHSNTLATVLDNTTTPMGSRMLQRWIHEPLRDRQRIEARQSALEEILENGLYDELHPLLKSLGDVERITARLALRNARPRDFSRLKHALAILPEIQQILARCQSAHLQSLARIISEFPEELALLDSAIVDNPPMLIRDGGVLKPGYNAELDQWRDLSQGATDYLAELEAREKEATGISTLKVGYNRVHGYYIEVSRRESDLVPLSYQRRQTLKNTERYIVAELKEHEEKVLSSQGKALALEKQLWDQLFDLILPQLHELQLFAQGAAELDVLANFAERADTLNYQRPVLTDIPGIQIESGRHPVIEQVSQTPFIANPVTLSPARKMLIVTGPNMGGKSTYMRQVALITLMAHIGCYVPAQSATIGPVDRIFTRIGAADDLASGRSTFMVEMTETANILHNATPKSLVLMDEIGRGTSTYDGLSLAWSAAEYLAQKIEAMTLFATHYFELTQLPELISNVANVHLDAIEHGDTIVFMHAVQDGAASKSYGLQVAALAGVPNPVILAAKHKLHHLESRDNHNTQQTDSSGVQQSMVFPDPIKSPLEEAMESIRPDELSPKQALDILYRLKDLS</sequence>
<proteinExistence type="inferred from homology"/>
<dbReference type="EMBL" id="CP000961">
    <property type="protein sequence ID" value="ACA87610.1"/>
    <property type="molecule type" value="Genomic_DNA"/>
</dbReference>
<dbReference type="RefSeq" id="WP_012325945.1">
    <property type="nucleotide sequence ID" value="NC_010506.1"/>
</dbReference>
<dbReference type="SMR" id="B1KPS7"/>
<dbReference type="STRING" id="392500.Swoo_3341"/>
<dbReference type="KEGG" id="swd:Swoo_3341"/>
<dbReference type="eggNOG" id="COG0249">
    <property type="taxonomic scope" value="Bacteria"/>
</dbReference>
<dbReference type="HOGENOM" id="CLU_002472_4_0_6"/>
<dbReference type="Proteomes" id="UP000002168">
    <property type="component" value="Chromosome"/>
</dbReference>
<dbReference type="GO" id="GO:0005829">
    <property type="term" value="C:cytosol"/>
    <property type="evidence" value="ECO:0007669"/>
    <property type="project" value="TreeGrafter"/>
</dbReference>
<dbReference type="GO" id="GO:0005524">
    <property type="term" value="F:ATP binding"/>
    <property type="evidence" value="ECO:0007669"/>
    <property type="project" value="UniProtKB-UniRule"/>
</dbReference>
<dbReference type="GO" id="GO:0140664">
    <property type="term" value="F:ATP-dependent DNA damage sensor activity"/>
    <property type="evidence" value="ECO:0007669"/>
    <property type="project" value="InterPro"/>
</dbReference>
<dbReference type="GO" id="GO:0003684">
    <property type="term" value="F:damaged DNA binding"/>
    <property type="evidence" value="ECO:0007669"/>
    <property type="project" value="UniProtKB-UniRule"/>
</dbReference>
<dbReference type="GO" id="GO:0030983">
    <property type="term" value="F:mismatched DNA binding"/>
    <property type="evidence" value="ECO:0007669"/>
    <property type="project" value="InterPro"/>
</dbReference>
<dbReference type="GO" id="GO:0006298">
    <property type="term" value="P:mismatch repair"/>
    <property type="evidence" value="ECO:0007669"/>
    <property type="project" value="UniProtKB-UniRule"/>
</dbReference>
<dbReference type="CDD" id="cd03284">
    <property type="entry name" value="ABC_MutS1"/>
    <property type="match status" value="1"/>
</dbReference>
<dbReference type="FunFam" id="1.10.1420.10:FF:000002">
    <property type="entry name" value="DNA mismatch repair protein MutS"/>
    <property type="match status" value="1"/>
</dbReference>
<dbReference type="FunFam" id="3.30.420.110:FF:000001">
    <property type="entry name" value="DNA mismatch repair protein MutS"/>
    <property type="match status" value="1"/>
</dbReference>
<dbReference type="FunFam" id="3.40.1170.10:FF:000001">
    <property type="entry name" value="DNA mismatch repair protein MutS"/>
    <property type="match status" value="1"/>
</dbReference>
<dbReference type="FunFam" id="3.40.50.300:FF:000283">
    <property type="entry name" value="DNA mismatch repair protein MutS"/>
    <property type="match status" value="1"/>
</dbReference>
<dbReference type="Gene3D" id="1.10.1420.10">
    <property type="match status" value="2"/>
</dbReference>
<dbReference type="Gene3D" id="6.10.140.430">
    <property type="match status" value="1"/>
</dbReference>
<dbReference type="Gene3D" id="3.40.1170.10">
    <property type="entry name" value="DNA repair protein MutS, domain I"/>
    <property type="match status" value="1"/>
</dbReference>
<dbReference type="Gene3D" id="3.30.420.110">
    <property type="entry name" value="MutS, connector domain"/>
    <property type="match status" value="1"/>
</dbReference>
<dbReference type="Gene3D" id="3.40.50.300">
    <property type="entry name" value="P-loop containing nucleotide triphosphate hydrolases"/>
    <property type="match status" value="1"/>
</dbReference>
<dbReference type="HAMAP" id="MF_00096">
    <property type="entry name" value="MutS"/>
    <property type="match status" value="1"/>
</dbReference>
<dbReference type="InterPro" id="IPR005748">
    <property type="entry name" value="DNA_mismatch_repair_MutS"/>
</dbReference>
<dbReference type="InterPro" id="IPR007695">
    <property type="entry name" value="DNA_mismatch_repair_MutS-lik_N"/>
</dbReference>
<dbReference type="InterPro" id="IPR017261">
    <property type="entry name" value="DNA_mismatch_repair_MutS/MSH"/>
</dbReference>
<dbReference type="InterPro" id="IPR000432">
    <property type="entry name" value="DNA_mismatch_repair_MutS_C"/>
</dbReference>
<dbReference type="InterPro" id="IPR007861">
    <property type="entry name" value="DNA_mismatch_repair_MutS_clamp"/>
</dbReference>
<dbReference type="InterPro" id="IPR007696">
    <property type="entry name" value="DNA_mismatch_repair_MutS_core"/>
</dbReference>
<dbReference type="InterPro" id="IPR016151">
    <property type="entry name" value="DNA_mismatch_repair_MutS_N"/>
</dbReference>
<dbReference type="InterPro" id="IPR036187">
    <property type="entry name" value="DNA_mismatch_repair_MutS_sf"/>
</dbReference>
<dbReference type="InterPro" id="IPR007860">
    <property type="entry name" value="DNA_mmatch_repair_MutS_con_dom"/>
</dbReference>
<dbReference type="InterPro" id="IPR045076">
    <property type="entry name" value="MutS"/>
</dbReference>
<dbReference type="InterPro" id="IPR036678">
    <property type="entry name" value="MutS_con_dom_sf"/>
</dbReference>
<dbReference type="InterPro" id="IPR027417">
    <property type="entry name" value="P-loop_NTPase"/>
</dbReference>
<dbReference type="NCBIfam" id="TIGR01070">
    <property type="entry name" value="mutS1"/>
    <property type="match status" value="1"/>
</dbReference>
<dbReference type="NCBIfam" id="NF003810">
    <property type="entry name" value="PRK05399.1"/>
    <property type="match status" value="1"/>
</dbReference>
<dbReference type="PANTHER" id="PTHR11361:SF34">
    <property type="entry name" value="DNA MISMATCH REPAIR PROTEIN MSH1, MITOCHONDRIAL"/>
    <property type="match status" value="1"/>
</dbReference>
<dbReference type="PANTHER" id="PTHR11361">
    <property type="entry name" value="DNA MISMATCH REPAIR PROTEIN MUTS FAMILY MEMBER"/>
    <property type="match status" value="1"/>
</dbReference>
<dbReference type="Pfam" id="PF01624">
    <property type="entry name" value="MutS_I"/>
    <property type="match status" value="1"/>
</dbReference>
<dbReference type="Pfam" id="PF05188">
    <property type="entry name" value="MutS_II"/>
    <property type="match status" value="1"/>
</dbReference>
<dbReference type="Pfam" id="PF05192">
    <property type="entry name" value="MutS_III"/>
    <property type="match status" value="1"/>
</dbReference>
<dbReference type="Pfam" id="PF05190">
    <property type="entry name" value="MutS_IV"/>
    <property type="match status" value="1"/>
</dbReference>
<dbReference type="Pfam" id="PF00488">
    <property type="entry name" value="MutS_V"/>
    <property type="match status" value="1"/>
</dbReference>
<dbReference type="PIRSF" id="PIRSF037677">
    <property type="entry name" value="DNA_mis_repair_Msh6"/>
    <property type="match status" value="1"/>
</dbReference>
<dbReference type="SMART" id="SM00534">
    <property type="entry name" value="MUTSac"/>
    <property type="match status" value="1"/>
</dbReference>
<dbReference type="SMART" id="SM00533">
    <property type="entry name" value="MUTSd"/>
    <property type="match status" value="1"/>
</dbReference>
<dbReference type="SUPFAM" id="SSF55271">
    <property type="entry name" value="DNA repair protein MutS, domain I"/>
    <property type="match status" value="1"/>
</dbReference>
<dbReference type="SUPFAM" id="SSF53150">
    <property type="entry name" value="DNA repair protein MutS, domain II"/>
    <property type="match status" value="1"/>
</dbReference>
<dbReference type="SUPFAM" id="SSF48334">
    <property type="entry name" value="DNA repair protein MutS, domain III"/>
    <property type="match status" value="1"/>
</dbReference>
<dbReference type="SUPFAM" id="SSF52540">
    <property type="entry name" value="P-loop containing nucleoside triphosphate hydrolases"/>
    <property type="match status" value="1"/>
</dbReference>
<dbReference type="PROSITE" id="PS00486">
    <property type="entry name" value="DNA_MISMATCH_REPAIR_2"/>
    <property type="match status" value="1"/>
</dbReference>
<evidence type="ECO:0000255" key="1">
    <source>
        <dbReference type="HAMAP-Rule" id="MF_00096"/>
    </source>
</evidence>
<name>MUTS_SHEWM</name>
<organism>
    <name type="scientific">Shewanella woodyi (strain ATCC 51908 / MS32)</name>
    <dbReference type="NCBI Taxonomy" id="392500"/>
    <lineage>
        <taxon>Bacteria</taxon>
        <taxon>Pseudomonadati</taxon>
        <taxon>Pseudomonadota</taxon>
        <taxon>Gammaproteobacteria</taxon>
        <taxon>Alteromonadales</taxon>
        <taxon>Shewanellaceae</taxon>
        <taxon>Shewanella</taxon>
    </lineage>
</organism>
<gene>
    <name evidence="1" type="primary">mutS</name>
    <name type="ordered locus">Swoo_3341</name>
</gene>
<accession>B1KPS7</accession>
<reference key="1">
    <citation type="submission" date="2008-02" db="EMBL/GenBank/DDBJ databases">
        <title>Complete sequence of Shewanella woodyi ATCC 51908.</title>
        <authorList>
            <consortium name="US DOE Joint Genome Institute"/>
            <person name="Copeland A."/>
            <person name="Lucas S."/>
            <person name="Lapidus A."/>
            <person name="Glavina del Rio T."/>
            <person name="Dalin E."/>
            <person name="Tice H."/>
            <person name="Bruce D."/>
            <person name="Goodwin L."/>
            <person name="Pitluck S."/>
            <person name="Sims D."/>
            <person name="Brettin T."/>
            <person name="Detter J.C."/>
            <person name="Han C."/>
            <person name="Kuske C.R."/>
            <person name="Schmutz J."/>
            <person name="Larimer F."/>
            <person name="Land M."/>
            <person name="Hauser L."/>
            <person name="Kyrpides N."/>
            <person name="Lykidis A."/>
            <person name="Zhao J.-S."/>
            <person name="Richardson P."/>
        </authorList>
    </citation>
    <scope>NUCLEOTIDE SEQUENCE [LARGE SCALE GENOMIC DNA]</scope>
    <source>
        <strain>ATCC 51908 / MS32</strain>
    </source>
</reference>
<comment type="function">
    <text evidence="1">This protein is involved in the repair of mismatches in DNA. It is possible that it carries out the mismatch recognition step. This protein has a weak ATPase activity.</text>
</comment>
<comment type="similarity">
    <text evidence="1">Belongs to the DNA mismatch repair MutS family.</text>
</comment>
<protein>
    <recommendedName>
        <fullName evidence="1">DNA mismatch repair protein MutS</fullName>
    </recommendedName>
</protein>
<feature type="chain" id="PRO_1000093646" description="DNA mismatch repair protein MutS">
    <location>
        <begin position="1"/>
        <end position="858"/>
    </location>
</feature>
<feature type="binding site" evidence="1">
    <location>
        <begin position="618"/>
        <end position="625"/>
    </location>
    <ligand>
        <name>ATP</name>
        <dbReference type="ChEBI" id="CHEBI:30616"/>
    </ligand>
</feature>